<comment type="function">
    <text>Potential odorant receptor.</text>
</comment>
<comment type="subcellular location">
    <subcellularLocation>
        <location evidence="3">Cell membrane</location>
        <topology evidence="1">Multi-pass membrane protein</topology>
    </subcellularLocation>
</comment>
<comment type="similarity">
    <text evidence="2">Belongs to the G-protein coupled receptor 1 family.</text>
</comment>
<keyword id="KW-1003">Cell membrane</keyword>
<keyword id="KW-1015">Disulfide bond</keyword>
<keyword id="KW-0297">G-protein coupled receptor</keyword>
<keyword id="KW-0325">Glycoprotein</keyword>
<keyword id="KW-0472">Membrane</keyword>
<keyword id="KW-0552">Olfaction</keyword>
<keyword id="KW-0675">Receptor</keyword>
<keyword id="KW-1185">Reference proteome</keyword>
<keyword id="KW-0716">Sensory transduction</keyword>
<keyword id="KW-0807">Transducer</keyword>
<keyword id="KW-0812">Transmembrane</keyword>
<keyword id="KW-1133">Transmembrane helix</keyword>
<gene>
    <name evidence="4" type="primary">Or5p6</name>
    <name evidence="4" type="synonym">Mor204-13</name>
    <name evidence="4" type="synonym">Olfr478</name>
</gene>
<protein>
    <recommendedName>
        <fullName evidence="3">Olfactory receptor 5P6</fullName>
    </recommendedName>
    <alternativeName>
        <fullName>Olfactory receptor 204-13</fullName>
    </alternativeName>
    <alternativeName>
        <fullName>Olfactory receptor 478</fullName>
    </alternativeName>
</protein>
<name>OR5P6_MOUSE</name>
<reference key="1">
    <citation type="journal article" date="2002" name="Nat. Neurosci.">
        <title>The olfactory receptor gene superfamily of the mouse.</title>
        <authorList>
            <person name="Zhang X."/>
            <person name="Firestein S."/>
        </authorList>
    </citation>
    <scope>NUCLEOTIDE SEQUENCE [GENOMIC DNA]</scope>
</reference>
<reference key="2">
    <citation type="journal article" date="2002" name="Hum. Mol. Genet.">
        <title>Different evolutionary processes shaped the mouse and human olfactory receptor gene families.</title>
        <authorList>
            <person name="Young J.M."/>
            <person name="Friedman C."/>
            <person name="Williams E.M."/>
            <person name="Ross J.A."/>
            <person name="Tonnes-Priddy L."/>
            <person name="Trask B.J."/>
        </authorList>
    </citation>
    <scope>NUCLEOTIDE SEQUENCE [GENOMIC DNA]</scope>
</reference>
<reference key="3">
    <citation type="journal article" date="2002" name="Hum. Mol. Genet.">
        <authorList>
            <person name="Young J.M."/>
            <person name="Friedman C."/>
            <person name="Williams E.M."/>
            <person name="Ross J.A."/>
            <person name="Tonnes-Priddy L."/>
            <person name="Trask B.J."/>
        </authorList>
    </citation>
    <scope>ERRATUM OF PUBMED:11875048</scope>
</reference>
<accession>Q8VG04</accession>
<proteinExistence type="inferred from homology"/>
<evidence type="ECO:0000255" key="1"/>
<evidence type="ECO:0000255" key="2">
    <source>
        <dbReference type="PROSITE-ProRule" id="PRU00521"/>
    </source>
</evidence>
<evidence type="ECO:0000305" key="3"/>
<evidence type="ECO:0000312" key="4">
    <source>
        <dbReference type="MGI" id="MGI:3030312"/>
    </source>
</evidence>
<organism>
    <name type="scientific">Mus musculus</name>
    <name type="common">Mouse</name>
    <dbReference type="NCBI Taxonomy" id="10090"/>
    <lineage>
        <taxon>Eukaryota</taxon>
        <taxon>Metazoa</taxon>
        <taxon>Chordata</taxon>
        <taxon>Craniata</taxon>
        <taxon>Vertebrata</taxon>
        <taxon>Euteleostomi</taxon>
        <taxon>Mammalia</taxon>
        <taxon>Eutheria</taxon>
        <taxon>Euarchontoglires</taxon>
        <taxon>Glires</taxon>
        <taxon>Rodentia</taxon>
        <taxon>Myomorpha</taxon>
        <taxon>Muroidea</taxon>
        <taxon>Muridae</taxon>
        <taxon>Murinae</taxon>
        <taxon>Mus</taxon>
        <taxon>Mus</taxon>
    </lineage>
</organism>
<dbReference type="EMBL" id="AY073361">
    <property type="protein sequence ID" value="AAL61024.1"/>
    <property type="molecule type" value="Genomic_DNA"/>
</dbReference>
<dbReference type="EMBL" id="AY317586">
    <property type="protein sequence ID" value="AAP70982.1"/>
    <property type="molecule type" value="Genomic_DNA"/>
</dbReference>
<dbReference type="CCDS" id="CCDS21700.1"/>
<dbReference type="RefSeq" id="NP_666945.1">
    <property type="nucleotide sequence ID" value="NM_146734.2"/>
</dbReference>
<dbReference type="RefSeq" id="XP_006507934.1">
    <property type="nucleotide sequence ID" value="XM_006507871.1"/>
</dbReference>
<dbReference type="SMR" id="Q8VG04"/>
<dbReference type="FunCoup" id="Q8VG04">
    <property type="interactions" value="1175"/>
</dbReference>
<dbReference type="STRING" id="10090.ENSMUSP00000147713"/>
<dbReference type="GlyCosmos" id="Q8VG04">
    <property type="glycosylation" value="1 site, No reported glycans"/>
</dbReference>
<dbReference type="GlyGen" id="Q8VG04">
    <property type="glycosylation" value="1 site"/>
</dbReference>
<dbReference type="iPTMnet" id="Q8VG04"/>
<dbReference type="PhosphoSitePlus" id="Q8VG04"/>
<dbReference type="PaxDb" id="10090-ENSMUSP00000058931"/>
<dbReference type="DNASU" id="258729"/>
<dbReference type="Ensembl" id="ENSMUST00000049719.4">
    <property type="protein sequence ID" value="ENSMUSP00000058931.4"/>
    <property type="gene ID" value="ENSMUSG00000094426.4"/>
</dbReference>
<dbReference type="Ensembl" id="ENSMUST00000210173.3">
    <property type="protein sequence ID" value="ENSMUSP00000147713.2"/>
    <property type="gene ID" value="ENSMUSG00000094426.4"/>
</dbReference>
<dbReference type="GeneID" id="258729"/>
<dbReference type="KEGG" id="mmu:258729"/>
<dbReference type="UCSC" id="uc009jbt.1">
    <property type="organism name" value="mouse"/>
</dbReference>
<dbReference type="AGR" id="MGI:3030312"/>
<dbReference type="CTD" id="258729"/>
<dbReference type="MGI" id="MGI:3030312">
    <property type="gene designation" value="Or5p6"/>
</dbReference>
<dbReference type="VEuPathDB" id="HostDB:ENSMUSG00000094426"/>
<dbReference type="eggNOG" id="ENOG502SKA1">
    <property type="taxonomic scope" value="Eukaryota"/>
</dbReference>
<dbReference type="GeneTree" id="ENSGT01130000278279"/>
<dbReference type="HOGENOM" id="CLU_012526_1_0_1"/>
<dbReference type="InParanoid" id="Q8VG04"/>
<dbReference type="OMA" id="TCSFTIC"/>
<dbReference type="OrthoDB" id="9440694at2759"/>
<dbReference type="PhylomeDB" id="Q8VG04"/>
<dbReference type="TreeFam" id="TF338848"/>
<dbReference type="BioGRID-ORCS" id="258729">
    <property type="hits" value="2 hits in 70 CRISPR screens"/>
</dbReference>
<dbReference type="PRO" id="PR:Q8VG04"/>
<dbReference type="Proteomes" id="UP000000589">
    <property type="component" value="Chromosome 7"/>
</dbReference>
<dbReference type="RNAct" id="Q8VG04">
    <property type="molecule type" value="protein"/>
</dbReference>
<dbReference type="Bgee" id="ENSMUSG00000094426">
    <property type="expression patterns" value="Expressed in embryonic brain and 10 other cell types or tissues"/>
</dbReference>
<dbReference type="GO" id="GO:0016020">
    <property type="term" value="C:membrane"/>
    <property type="evidence" value="ECO:0000247"/>
    <property type="project" value="MGI"/>
</dbReference>
<dbReference type="GO" id="GO:0005886">
    <property type="term" value="C:plasma membrane"/>
    <property type="evidence" value="ECO:0007669"/>
    <property type="project" value="UniProtKB-SubCell"/>
</dbReference>
<dbReference type="GO" id="GO:0004930">
    <property type="term" value="F:G protein-coupled receptor activity"/>
    <property type="evidence" value="ECO:0007669"/>
    <property type="project" value="UniProtKB-KW"/>
</dbReference>
<dbReference type="GO" id="GO:0004984">
    <property type="term" value="F:olfactory receptor activity"/>
    <property type="evidence" value="ECO:0000247"/>
    <property type="project" value="MGI"/>
</dbReference>
<dbReference type="GO" id="GO:0007186">
    <property type="term" value="P:G protein-coupled receptor signaling pathway"/>
    <property type="evidence" value="ECO:0000247"/>
    <property type="project" value="MGI"/>
</dbReference>
<dbReference type="GO" id="GO:0007608">
    <property type="term" value="P:sensory perception of smell"/>
    <property type="evidence" value="ECO:0000247"/>
    <property type="project" value="MGI"/>
</dbReference>
<dbReference type="CDD" id="cd15416">
    <property type="entry name" value="7tmA_OR5P-like"/>
    <property type="match status" value="1"/>
</dbReference>
<dbReference type="FunFam" id="1.20.1070.10:FF:000004">
    <property type="entry name" value="Olfactory receptor"/>
    <property type="match status" value="1"/>
</dbReference>
<dbReference type="Gene3D" id="1.20.1070.10">
    <property type="entry name" value="Rhodopsin 7-helix transmembrane proteins"/>
    <property type="match status" value="1"/>
</dbReference>
<dbReference type="InterPro" id="IPR000276">
    <property type="entry name" value="GPCR_Rhodpsn"/>
</dbReference>
<dbReference type="InterPro" id="IPR017452">
    <property type="entry name" value="GPCR_Rhodpsn_7TM"/>
</dbReference>
<dbReference type="InterPro" id="IPR000725">
    <property type="entry name" value="Olfact_rcpt"/>
</dbReference>
<dbReference type="PANTHER" id="PTHR48018">
    <property type="entry name" value="OLFACTORY RECEPTOR"/>
    <property type="match status" value="1"/>
</dbReference>
<dbReference type="Pfam" id="PF13853">
    <property type="entry name" value="7tm_4"/>
    <property type="match status" value="1"/>
</dbReference>
<dbReference type="PRINTS" id="PR00237">
    <property type="entry name" value="GPCRRHODOPSN"/>
</dbReference>
<dbReference type="PRINTS" id="PR00245">
    <property type="entry name" value="OLFACTORYR"/>
</dbReference>
<dbReference type="SUPFAM" id="SSF81321">
    <property type="entry name" value="Family A G protein-coupled receptor-like"/>
    <property type="match status" value="1"/>
</dbReference>
<dbReference type="PROSITE" id="PS00237">
    <property type="entry name" value="G_PROTEIN_RECEP_F1_1"/>
    <property type="match status" value="1"/>
</dbReference>
<dbReference type="PROSITE" id="PS50262">
    <property type="entry name" value="G_PROTEIN_RECEP_F1_2"/>
    <property type="match status" value="1"/>
</dbReference>
<sequence length="314" mass="34940">MAFQEDGNHTAVTEFVLFGLTDDPVLRVILFIIFLCIYLVTVSGNLSTILLIRVSSQLHHPMYFFLSHLAFADIGYSSSVTPNMLVNFLVERHTISYIGCAIQLGSVVFFGSSECFILAAMAYDRFMAICNPLLYSTKMSTQVCVQLLLIAYIGGFLNTWSFTICFYSLVFCGPNGVNHFFCDFAPLIELSCSDVSVPATVPSFTAGSIIVVTVIVIAISYIYILITILKMHSTEGRQKAFSTCTSHLTAVTLFYGTITFIYVMPKSSFSTDQNKVVSVFYMVVIPMLNPLIYSLRNNEIKGALKRQIGRKIFS</sequence>
<feature type="chain" id="PRO_0000150837" description="Olfactory receptor 5P6">
    <location>
        <begin position="1"/>
        <end position="314"/>
    </location>
</feature>
<feature type="topological domain" description="Extracellular" evidence="1">
    <location>
        <begin position="1"/>
        <end position="28"/>
    </location>
</feature>
<feature type="transmembrane region" description="Helical; Name=1" evidence="1">
    <location>
        <begin position="29"/>
        <end position="49"/>
    </location>
</feature>
<feature type="topological domain" description="Cytoplasmic" evidence="1">
    <location>
        <begin position="50"/>
        <end position="57"/>
    </location>
</feature>
<feature type="transmembrane region" description="Helical; Name=2" evidence="1">
    <location>
        <begin position="58"/>
        <end position="78"/>
    </location>
</feature>
<feature type="topological domain" description="Extracellular" evidence="1">
    <location>
        <begin position="79"/>
        <end position="102"/>
    </location>
</feature>
<feature type="transmembrane region" description="Helical; Name=3" evidence="1">
    <location>
        <begin position="103"/>
        <end position="123"/>
    </location>
</feature>
<feature type="topological domain" description="Cytoplasmic" evidence="1">
    <location>
        <begin position="124"/>
        <end position="136"/>
    </location>
</feature>
<feature type="transmembrane region" description="Helical; Name=4" evidence="1">
    <location>
        <begin position="137"/>
        <end position="157"/>
    </location>
</feature>
<feature type="topological domain" description="Extracellular" evidence="1">
    <location>
        <begin position="158"/>
        <end position="199"/>
    </location>
</feature>
<feature type="transmembrane region" description="Helical; Name=5" evidence="1">
    <location>
        <begin position="200"/>
        <end position="220"/>
    </location>
</feature>
<feature type="topological domain" description="Cytoplasmic" evidence="1">
    <location>
        <begin position="221"/>
        <end position="240"/>
    </location>
</feature>
<feature type="transmembrane region" description="Helical; Name=6" evidence="1">
    <location>
        <begin position="241"/>
        <end position="261"/>
    </location>
</feature>
<feature type="topological domain" description="Extracellular" evidence="1">
    <location>
        <begin position="262"/>
        <end position="274"/>
    </location>
</feature>
<feature type="transmembrane region" description="Helical; Name=7" evidence="1">
    <location>
        <begin position="275"/>
        <end position="295"/>
    </location>
</feature>
<feature type="topological domain" description="Cytoplasmic" evidence="1">
    <location>
        <begin position="296"/>
        <end position="314"/>
    </location>
</feature>
<feature type="glycosylation site" description="N-linked (GlcNAc...) asparagine" evidence="1">
    <location>
        <position position="8"/>
    </location>
</feature>
<feature type="disulfide bond" evidence="2">
    <location>
        <begin position="100"/>
        <end position="192"/>
    </location>
</feature>